<gene>
    <name evidence="1" type="primary">atpH</name>
    <name type="ordered locus">RHECIAT_CH0004154</name>
</gene>
<reference key="1">
    <citation type="journal article" date="2010" name="Appl. Environ. Microbiol.">
        <title>Conserved symbiotic plasmid DNA sequences in the multireplicon pangenomic structure of Rhizobium etli.</title>
        <authorList>
            <person name="Gonzalez V."/>
            <person name="Acosta J.L."/>
            <person name="Santamaria R.I."/>
            <person name="Bustos P."/>
            <person name="Fernandez J.L."/>
            <person name="Hernandez Gonzalez I.L."/>
            <person name="Diaz R."/>
            <person name="Flores M."/>
            <person name="Palacios R."/>
            <person name="Mora J."/>
            <person name="Davila G."/>
        </authorList>
    </citation>
    <scope>NUCLEOTIDE SEQUENCE [LARGE SCALE GENOMIC DNA]</scope>
    <source>
        <strain>CIAT 652</strain>
    </source>
</reference>
<protein>
    <recommendedName>
        <fullName evidence="1">ATP synthase subunit delta</fullName>
    </recommendedName>
    <alternativeName>
        <fullName evidence="1">ATP synthase F(1) sector subunit delta</fullName>
    </alternativeName>
    <alternativeName>
        <fullName evidence="1">F-type ATPase subunit delta</fullName>
        <shortName evidence="1">F-ATPase subunit delta</shortName>
    </alternativeName>
</protein>
<keyword id="KW-0066">ATP synthesis</keyword>
<keyword id="KW-0997">Cell inner membrane</keyword>
<keyword id="KW-1003">Cell membrane</keyword>
<keyword id="KW-0139">CF(1)</keyword>
<keyword id="KW-0375">Hydrogen ion transport</keyword>
<keyword id="KW-0406">Ion transport</keyword>
<keyword id="KW-0472">Membrane</keyword>
<keyword id="KW-0813">Transport</keyword>
<name>ATPD_RHIE6</name>
<sequence>MPVADTSQLTSGVAERYASSLFELALEHGAVDSVTADLDRFQAMLDESAELKRFVASPVFSAEDQLKAIVAISERAGISGFFANFLKVVARNRRLFALPGMIRAFRLIAANHRGEISAEVISAHALSQAQETELKAALKSVTGKDVTISVTVDPSILGGLIVKVGSRQIDTSLRTKLSTLKLALKEVG</sequence>
<accession>B3PQ71</accession>
<feature type="chain" id="PRO_0000371090" description="ATP synthase subunit delta">
    <location>
        <begin position="1"/>
        <end position="188"/>
    </location>
</feature>
<proteinExistence type="inferred from homology"/>
<evidence type="ECO:0000255" key="1">
    <source>
        <dbReference type="HAMAP-Rule" id="MF_01416"/>
    </source>
</evidence>
<evidence type="ECO:0000305" key="2"/>
<dbReference type="EMBL" id="CP001074">
    <property type="protein sequence ID" value="ACE93083.1"/>
    <property type="status" value="ALT_INIT"/>
    <property type="molecule type" value="Genomic_DNA"/>
</dbReference>
<dbReference type="SMR" id="B3PQ71"/>
<dbReference type="KEGG" id="rec:RHECIAT_CH0004154"/>
<dbReference type="eggNOG" id="COG0712">
    <property type="taxonomic scope" value="Bacteria"/>
</dbReference>
<dbReference type="HOGENOM" id="CLU_085114_0_1_5"/>
<dbReference type="Proteomes" id="UP000008817">
    <property type="component" value="Chromosome"/>
</dbReference>
<dbReference type="GO" id="GO:0005886">
    <property type="term" value="C:plasma membrane"/>
    <property type="evidence" value="ECO:0007669"/>
    <property type="project" value="UniProtKB-SubCell"/>
</dbReference>
<dbReference type="GO" id="GO:0045259">
    <property type="term" value="C:proton-transporting ATP synthase complex"/>
    <property type="evidence" value="ECO:0007669"/>
    <property type="project" value="UniProtKB-KW"/>
</dbReference>
<dbReference type="GO" id="GO:0046933">
    <property type="term" value="F:proton-transporting ATP synthase activity, rotational mechanism"/>
    <property type="evidence" value="ECO:0007669"/>
    <property type="project" value="UniProtKB-UniRule"/>
</dbReference>
<dbReference type="Gene3D" id="1.10.520.20">
    <property type="entry name" value="N-terminal domain of the delta subunit of the F1F0-ATP synthase"/>
    <property type="match status" value="1"/>
</dbReference>
<dbReference type="HAMAP" id="MF_01416">
    <property type="entry name" value="ATP_synth_delta_bact"/>
    <property type="match status" value="1"/>
</dbReference>
<dbReference type="InterPro" id="IPR026015">
    <property type="entry name" value="ATP_synth_OSCP/delta_N_sf"/>
</dbReference>
<dbReference type="InterPro" id="IPR020781">
    <property type="entry name" value="ATPase_OSCP/d_CS"/>
</dbReference>
<dbReference type="InterPro" id="IPR000711">
    <property type="entry name" value="ATPase_OSCP/dsu"/>
</dbReference>
<dbReference type="NCBIfam" id="TIGR01145">
    <property type="entry name" value="ATP_synt_delta"/>
    <property type="match status" value="1"/>
</dbReference>
<dbReference type="NCBIfam" id="NF004402">
    <property type="entry name" value="PRK05758.2-2"/>
    <property type="match status" value="1"/>
</dbReference>
<dbReference type="NCBIfam" id="NF004406">
    <property type="entry name" value="PRK05758.3-2"/>
    <property type="match status" value="1"/>
</dbReference>
<dbReference type="PANTHER" id="PTHR11910">
    <property type="entry name" value="ATP SYNTHASE DELTA CHAIN"/>
    <property type="match status" value="1"/>
</dbReference>
<dbReference type="Pfam" id="PF00213">
    <property type="entry name" value="OSCP"/>
    <property type="match status" value="1"/>
</dbReference>
<dbReference type="PRINTS" id="PR00125">
    <property type="entry name" value="ATPASEDELTA"/>
</dbReference>
<dbReference type="SUPFAM" id="SSF47928">
    <property type="entry name" value="N-terminal domain of the delta subunit of the F1F0-ATP synthase"/>
    <property type="match status" value="1"/>
</dbReference>
<dbReference type="PROSITE" id="PS00389">
    <property type="entry name" value="ATPASE_DELTA"/>
    <property type="match status" value="1"/>
</dbReference>
<organism>
    <name type="scientific">Rhizobium etli (strain CIAT 652)</name>
    <dbReference type="NCBI Taxonomy" id="491916"/>
    <lineage>
        <taxon>Bacteria</taxon>
        <taxon>Pseudomonadati</taxon>
        <taxon>Pseudomonadota</taxon>
        <taxon>Alphaproteobacteria</taxon>
        <taxon>Hyphomicrobiales</taxon>
        <taxon>Rhizobiaceae</taxon>
        <taxon>Rhizobium/Agrobacterium group</taxon>
        <taxon>Rhizobium</taxon>
    </lineage>
</organism>
<comment type="function">
    <text evidence="1">F(1)F(0) ATP synthase produces ATP from ADP in the presence of a proton or sodium gradient. F-type ATPases consist of two structural domains, F(1) containing the extramembraneous catalytic core and F(0) containing the membrane proton channel, linked together by a central stalk and a peripheral stalk. During catalysis, ATP synthesis in the catalytic domain of F(1) is coupled via a rotary mechanism of the central stalk subunits to proton translocation.</text>
</comment>
<comment type="function">
    <text evidence="1">This protein is part of the stalk that links CF(0) to CF(1). It either transmits conformational changes from CF(0) to CF(1) or is implicated in proton conduction.</text>
</comment>
<comment type="subunit">
    <text evidence="1">F-type ATPases have 2 components, F(1) - the catalytic core - and F(0) - the membrane proton channel. F(1) has five subunits: alpha(3), beta(3), gamma(1), delta(1), epsilon(1). F(0) has three main subunits: a(1), b(2) and c(10-14). The alpha and beta chains form an alternating ring which encloses part of the gamma chain. F(1) is attached to F(0) by a central stalk formed by the gamma and epsilon chains, while a peripheral stalk is formed by the delta and b chains.</text>
</comment>
<comment type="subcellular location">
    <subcellularLocation>
        <location evidence="1">Cell inner membrane</location>
        <topology evidence="1">Peripheral membrane protein</topology>
    </subcellularLocation>
</comment>
<comment type="similarity">
    <text evidence="1">Belongs to the ATPase delta chain family.</text>
</comment>
<comment type="sequence caution" evidence="2">
    <conflict type="erroneous initiation">
        <sequence resource="EMBL-CDS" id="ACE93083"/>
    </conflict>
</comment>